<evidence type="ECO:0000255" key="1">
    <source>
        <dbReference type="HAMAP-Rule" id="MF_00093"/>
    </source>
</evidence>
<sequence>MKPFLRQQLARYTDRLGELEFLLSREDIMQDMKQFLLLSREHTEVGAVASRWARYQQLEADLSGAQELLRGSVDDPDMTAMAQEEIDNASAELQKLENELQRMLLPKDPDDARNAFVEIRAGTGGDESALFAADLLRMYTRYCERRGWKAEIISESPSELGGYKEVVIKIEGDHVYGALKFESGGHRVQRVPVTETQGRIHTSACTVAVLAEPDEAVAIQINPADLRIDTYRASGAGGQHINKTDSAVRITHLPTGIVAECQDGRSQHSNKAQALKVLTARIHEKDRSERAAKDAAERKGLIGSGDRSDRIRTYNFPQGRLTDHRINLTLYKLLTIMEGDLDDVVQALQAFEAAQQLAALELGAGA</sequence>
<gene>
    <name evidence="1" type="primary">prfA</name>
    <name type="ordered locus">Rfer_1280</name>
</gene>
<accession>Q21YY9</accession>
<reference key="1">
    <citation type="submission" date="2006-02" db="EMBL/GenBank/DDBJ databases">
        <title>Complete sequence of chromosome of Rhodoferax ferrireducens DSM 15236.</title>
        <authorList>
            <person name="Copeland A."/>
            <person name="Lucas S."/>
            <person name="Lapidus A."/>
            <person name="Barry K."/>
            <person name="Detter J.C."/>
            <person name="Glavina del Rio T."/>
            <person name="Hammon N."/>
            <person name="Israni S."/>
            <person name="Pitluck S."/>
            <person name="Brettin T."/>
            <person name="Bruce D."/>
            <person name="Han C."/>
            <person name="Tapia R."/>
            <person name="Gilna P."/>
            <person name="Kiss H."/>
            <person name="Schmutz J."/>
            <person name="Larimer F."/>
            <person name="Land M."/>
            <person name="Kyrpides N."/>
            <person name="Ivanova N."/>
            <person name="Richardson P."/>
        </authorList>
    </citation>
    <scope>NUCLEOTIDE SEQUENCE [LARGE SCALE GENOMIC DNA]</scope>
    <source>
        <strain>ATCC BAA-621 / DSM 15236 / T118</strain>
    </source>
</reference>
<organism>
    <name type="scientific">Albidiferax ferrireducens (strain ATCC BAA-621 / DSM 15236 / T118)</name>
    <name type="common">Rhodoferax ferrireducens</name>
    <dbReference type="NCBI Taxonomy" id="338969"/>
    <lineage>
        <taxon>Bacteria</taxon>
        <taxon>Pseudomonadati</taxon>
        <taxon>Pseudomonadota</taxon>
        <taxon>Betaproteobacteria</taxon>
        <taxon>Burkholderiales</taxon>
        <taxon>Comamonadaceae</taxon>
        <taxon>Rhodoferax</taxon>
    </lineage>
</organism>
<dbReference type="EMBL" id="CP000267">
    <property type="protein sequence ID" value="ABD69014.1"/>
    <property type="molecule type" value="Genomic_DNA"/>
</dbReference>
<dbReference type="RefSeq" id="WP_011463582.1">
    <property type="nucleotide sequence ID" value="NC_007908.1"/>
</dbReference>
<dbReference type="SMR" id="Q21YY9"/>
<dbReference type="STRING" id="338969.Rfer_1280"/>
<dbReference type="KEGG" id="rfr:Rfer_1280"/>
<dbReference type="eggNOG" id="COG0216">
    <property type="taxonomic scope" value="Bacteria"/>
</dbReference>
<dbReference type="HOGENOM" id="CLU_036856_0_1_4"/>
<dbReference type="OrthoDB" id="9806673at2"/>
<dbReference type="Proteomes" id="UP000008332">
    <property type="component" value="Chromosome"/>
</dbReference>
<dbReference type="GO" id="GO:0005737">
    <property type="term" value="C:cytoplasm"/>
    <property type="evidence" value="ECO:0007669"/>
    <property type="project" value="UniProtKB-SubCell"/>
</dbReference>
<dbReference type="GO" id="GO:0016149">
    <property type="term" value="F:translation release factor activity, codon specific"/>
    <property type="evidence" value="ECO:0007669"/>
    <property type="project" value="UniProtKB-UniRule"/>
</dbReference>
<dbReference type="FunFam" id="3.30.160.20:FF:000004">
    <property type="entry name" value="Peptide chain release factor 1"/>
    <property type="match status" value="1"/>
</dbReference>
<dbReference type="FunFam" id="3.30.70.1660:FF:000002">
    <property type="entry name" value="Peptide chain release factor 1"/>
    <property type="match status" value="1"/>
</dbReference>
<dbReference type="FunFam" id="3.30.70.1660:FF:000004">
    <property type="entry name" value="Peptide chain release factor 1"/>
    <property type="match status" value="1"/>
</dbReference>
<dbReference type="Gene3D" id="3.30.160.20">
    <property type="match status" value="1"/>
</dbReference>
<dbReference type="Gene3D" id="3.30.70.1660">
    <property type="match status" value="1"/>
</dbReference>
<dbReference type="Gene3D" id="6.10.140.1950">
    <property type="match status" value="1"/>
</dbReference>
<dbReference type="HAMAP" id="MF_00093">
    <property type="entry name" value="Rel_fac_1"/>
    <property type="match status" value="1"/>
</dbReference>
<dbReference type="InterPro" id="IPR005139">
    <property type="entry name" value="PCRF"/>
</dbReference>
<dbReference type="InterPro" id="IPR000352">
    <property type="entry name" value="Pep_chain_release_fac_I"/>
</dbReference>
<dbReference type="InterPro" id="IPR045853">
    <property type="entry name" value="Pep_chain_release_fac_I_sf"/>
</dbReference>
<dbReference type="InterPro" id="IPR050057">
    <property type="entry name" value="Prokaryotic/Mito_RF"/>
</dbReference>
<dbReference type="InterPro" id="IPR004373">
    <property type="entry name" value="RF-1"/>
</dbReference>
<dbReference type="NCBIfam" id="TIGR00019">
    <property type="entry name" value="prfA"/>
    <property type="match status" value="1"/>
</dbReference>
<dbReference type="NCBIfam" id="NF001859">
    <property type="entry name" value="PRK00591.1"/>
    <property type="match status" value="1"/>
</dbReference>
<dbReference type="PANTHER" id="PTHR43804">
    <property type="entry name" value="LD18447P"/>
    <property type="match status" value="1"/>
</dbReference>
<dbReference type="PANTHER" id="PTHR43804:SF7">
    <property type="entry name" value="LD18447P"/>
    <property type="match status" value="1"/>
</dbReference>
<dbReference type="Pfam" id="PF03462">
    <property type="entry name" value="PCRF"/>
    <property type="match status" value="1"/>
</dbReference>
<dbReference type="Pfam" id="PF00472">
    <property type="entry name" value="RF-1"/>
    <property type="match status" value="1"/>
</dbReference>
<dbReference type="SMART" id="SM00937">
    <property type="entry name" value="PCRF"/>
    <property type="match status" value="1"/>
</dbReference>
<dbReference type="SUPFAM" id="SSF75620">
    <property type="entry name" value="Release factor"/>
    <property type="match status" value="1"/>
</dbReference>
<dbReference type="PROSITE" id="PS00745">
    <property type="entry name" value="RF_PROK_I"/>
    <property type="match status" value="1"/>
</dbReference>
<feature type="chain" id="PRO_0000263333" description="Peptide chain release factor 1">
    <location>
        <begin position="1"/>
        <end position="366"/>
    </location>
</feature>
<feature type="modified residue" description="N5-methylglutamine" evidence="1">
    <location>
        <position position="239"/>
    </location>
</feature>
<protein>
    <recommendedName>
        <fullName evidence="1">Peptide chain release factor 1</fullName>
        <shortName evidence="1">RF-1</shortName>
    </recommendedName>
</protein>
<keyword id="KW-0963">Cytoplasm</keyword>
<keyword id="KW-0488">Methylation</keyword>
<keyword id="KW-0648">Protein biosynthesis</keyword>
<keyword id="KW-1185">Reference proteome</keyword>
<proteinExistence type="inferred from homology"/>
<name>RF1_ALBFT</name>
<comment type="function">
    <text evidence="1">Peptide chain release factor 1 directs the termination of translation in response to the peptide chain termination codons UAG and UAA.</text>
</comment>
<comment type="subcellular location">
    <subcellularLocation>
        <location evidence="1">Cytoplasm</location>
    </subcellularLocation>
</comment>
<comment type="PTM">
    <text evidence="1">Methylated by PrmC. Methylation increases the termination efficiency of RF1.</text>
</comment>
<comment type="similarity">
    <text evidence="1">Belongs to the prokaryotic/mitochondrial release factor family.</text>
</comment>